<name>MASZ_RHOPA</name>
<dbReference type="EC" id="2.3.3.9" evidence="1"/>
<dbReference type="EMBL" id="BX572606">
    <property type="protein sequence ID" value="CAE29657.1"/>
    <property type="molecule type" value="Genomic_DNA"/>
</dbReference>
<dbReference type="RefSeq" id="WP_011159751.1">
    <property type="nucleotide sequence ID" value="NZ_CP116810.1"/>
</dbReference>
<dbReference type="SMR" id="Q6N234"/>
<dbReference type="STRING" id="258594.RPA4216"/>
<dbReference type="GeneID" id="66895342"/>
<dbReference type="eggNOG" id="COG2225">
    <property type="taxonomic scope" value="Bacteria"/>
</dbReference>
<dbReference type="HOGENOM" id="CLU_028446_1_0_5"/>
<dbReference type="PhylomeDB" id="Q6N234"/>
<dbReference type="UniPathway" id="UPA00703">
    <property type="reaction ID" value="UER00720"/>
</dbReference>
<dbReference type="GO" id="GO:0005829">
    <property type="term" value="C:cytosol"/>
    <property type="evidence" value="ECO:0007669"/>
    <property type="project" value="TreeGrafter"/>
</dbReference>
<dbReference type="GO" id="GO:0000287">
    <property type="term" value="F:magnesium ion binding"/>
    <property type="evidence" value="ECO:0007669"/>
    <property type="project" value="TreeGrafter"/>
</dbReference>
<dbReference type="GO" id="GO:0004474">
    <property type="term" value="F:malate synthase activity"/>
    <property type="evidence" value="ECO:0007669"/>
    <property type="project" value="UniProtKB-UniRule"/>
</dbReference>
<dbReference type="GO" id="GO:0009436">
    <property type="term" value="P:glyoxylate catabolic process"/>
    <property type="evidence" value="ECO:0007669"/>
    <property type="project" value="TreeGrafter"/>
</dbReference>
<dbReference type="GO" id="GO:0006097">
    <property type="term" value="P:glyoxylate cycle"/>
    <property type="evidence" value="ECO:0007669"/>
    <property type="project" value="UniProtKB-UniRule"/>
</dbReference>
<dbReference type="GO" id="GO:0006099">
    <property type="term" value="P:tricarboxylic acid cycle"/>
    <property type="evidence" value="ECO:0007669"/>
    <property type="project" value="UniProtKB-KW"/>
</dbReference>
<dbReference type="FunFam" id="3.20.20.360:FF:000002">
    <property type="entry name" value="Malate synthase G"/>
    <property type="match status" value="1"/>
</dbReference>
<dbReference type="Gene3D" id="3.20.20.360">
    <property type="entry name" value="Malate synthase, domain 3"/>
    <property type="match status" value="2"/>
</dbReference>
<dbReference type="Gene3D" id="1.20.1220.12">
    <property type="entry name" value="Malate synthase, domain III"/>
    <property type="match status" value="1"/>
</dbReference>
<dbReference type="HAMAP" id="MF_00641">
    <property type="entry name" value="Malate_synth_G"/>
    <property type="match status" value="1"/>
</dbReference>
<dbReference type="InterPro" id="IPR044856">
    <property type="entry name" value="Malate_synth_C_sf"/>
</dbReference>
<dbReference type="InterPro" id="IPR011076">
    <property type="entry name" value="Malate_synth_sf"/>
</dbReference>
<dbReference type="InterPro" id="IPR001465">
    <property type="entry name" value="Malate_synthase_TIM"/>
</dbReference>
<dbReference type="InterPro" id="IPR006253">
    <property type="entry name" value="Malate_synthG"/>
</dbReference>
<dbReference type="InterPro" id="IPR048355">
    <property type="entry name" value="MS_C"/>
</dbReference>
<dbReference type="InterPro" id="IPR048356">
    <property type="entry name" value="MS_N"/>
</dbReference>
<dbReference type="InterPro" id="IPR046363">
    <property type="entry name" value="MS_N_TIM-barrel_dom"/>
</dbReference>
<dbReference type="InterPro" id="IPR048357">
    <property type="entry name" value="MSG_insertion"/>
</dbReference>
<dbReference type="NCBIfam" id="TIGR01345">
    <property type="entry name" value="malate_syn_G"/>
    <property type="match status" value="1"/>
</dbReference>
<dbReference type="NCBIfam" id="NF002825">
    <property type="entry name" value="PRK02999.1"/>
    <property type="match status" value="1"/>
</dbReference>
<dbReference type="PANTHER" id="PTHR42739">
    <property type="entry name" value="MALATE SYNTHASE G"/>
    <property type="match status" value="1"/>
</dbReference>
<dbReference type="PANTHER" id="PTHR42739:SF1">
    <property type="entry name" value="MALATE SYNTHASE G"/>
    <property type="match status" value="1"/>
</dbReference>
<dbReference type="Pfam" id="PF20659">
    <property type="entry name" value="MS_C"/>
    <property type="match status" value="1"/>
</dbReference>
<dbReference type="Pfam" id="PF20656">
    <property type="entry name" value="MS_N"/>
    <property type="match status" value="1"/>
</dbReference>
<dbReference type="Pfam" id="PF01274">
    <property type="entry name" value="MS_TIM-barrel"/>
    <property type="match status" value="1"/>
</dbReference>
<dbReference type="Pfam" id="PF20658">
    <property type="entry name" value="MSG_insertion"/>
    <property type="match status" value="1"/>
</dbReference>
<dbReference type="SUPFAM" id="SSF51645">
    <property type="entry name" value="Malate synthase G"/>
    <property type="match status" value="1"/>
</dbReference>
<protein>
    <recommendedName>
        <fullName evidence="1">Malate synthase G</fullName>
        <ecNumber evidence="1">2.3.3.9</ecNumber>
    </recommendedName>
</protein>
<evidence type="ECO:0000255" key="1">
    <source>
        <dbReference type="HAMAP-Rule" id="MF_00641"/>
    </source>
</evidence>
<comment type="function">
    <text evidence="1">Involved in the glycolate utilization. Catalyzes the condensation and subsequent hydrolysis of acetyl-coenzyme A (acetyl-CoA) and glyoxylate to form malate and CoA.</text>
</comment>
<comment type="catalytic activity">
    <reaction evidence="1">
        <text>glyoxylate + acetyl-CoA + H2O = (S)-malate + CoA + H(+)</text>
        <dbReference type="Rhea" id="RHEA:18181"/>
        <dbReference type="ChEBI" id="CHEBI:15377"/>
        <dbReference type="ChEBI" id="CHEBI:15378"/>
        <dbReference type="ChEBI" id="CHEBI:15589"/>
        <dbReference type="ChEBI" id="CHEBI:36655"/>
        <dbReference type="ChEBI" id="CHEBI:57287"/>
        <dbReference type="ChEBI" id="CHEBI:57288"/>
        <dbReference type="EC" id="2.3.3.9"/>
    </reaction>
</comment>
<comment type="cofactor">
    <cofactor evidence="1">
        <name>Mg(2+)</name>
        <dbReference type="ChEBI" id="CHEBI:18420"/>
    </cofactor>
</comment>
<comment type="pathway">
    <text evidence="1">Carbohydrate metabolism; glyoxylate cycle; (S)-malate from isocitrate: step 2/2.</text>
</comment>
<comment type="subunit">
    <text evidence="1">Monomer.</text>
</comment>
<comment type="subcellular location">
    <subcellularLocation>
        <location evidence="1">Cytoplasm</location>
    </subcellularLocation>
</comment>
<comment type="similarity">
    <text evidence="1">Belongs to the malate synthase family. GlcB subfamily.</text>
</comment>
<proteinExistence type="inferred from homology"/>
<accession>Q6N234</accession>
<gene>
    <name evidence="1" type="primary">glcB</name>
    <name type="ordered locus">RPA4216</name>
</gene>
<feature type="chain" id="PRO_1000056924" description="Malate synthase G">
    <location>
        <begin position="1"/>
        <end position="724"/>
    </location>
</feature>
<feature type="active site" description="Proton acceptor" evidence="1">
    <location>
        <position position="337"/>
    </location>
</feature>
<feature type="active site" description="Proton donor" evidence="1">
    <location>
        <position position="628"/>
    </location>
</feature>
<feature type="binding site" evidence="1">
    <location>
        <position position="117"/>
    </location>
    <ligand>
        <name>acetyl-CoA</name>
        <dbReference type="ChEBI" id="CHEBI:57288"/>
    </ligand>
</feature>
<feature type="binding site" evidence="1">
    <location>
        <begin position="124"/>
        <end position="125"/>
    </location>
    <ligand>
        <name>acetyl-CoA</name>
        <dbReference type="ChEBI" id="CHEBI:57288"/>
    </ligand>
</feature>
<feature type="binding site" evidence="1">
    <location>
        <position position="273"/>
    </location>
    <ligand>
        <name>acetyl-CoA</name>
        <dbReference type="ChEBI" id="CHEBI:57288"/>
    </ligand>
</feature>
<feature type="binding site" evidence="1">
    <location>
        <position position="310"/>
    </location>
    <ligand>
        <name>acetyl-CoA</name>
        <dbReference type="ChEBI" id="CHEBI:57288"/>
    </ligand>
</feature>
<feature type="binding site" evidence="1">
    <location>
        <position position="337"/>
    </location>
    <ligand>
        <name>glyoxylate</name>
        <dbReference type="ChEBI" id="CHEBI:36655"/>
    </ligand>
</feature>
<feature type="binding site" evidence="1">
    <location>
        <position position="429"/>
    </location>
    <ligand>
        <name>glyoxylate</name>
        <dbReference type="ChEBI" id="CHEBI:36655"/>
    </ligand>
</feature>
<feature type="binding site" evidence="1">
    <location>
        <position position="429"/>
    </location>
    <ligand>
        <name>Mg(2+)</name>
        <dbReference type="ChEBI" id="CHEBI:18420"/>
    </ligand>
</feature>
<feature type="binding site" evidence="1">
    <location>
        <begin position="454"/>
        <end position="457"/>
    </location>
    <ligand>
        <name>glyoxylate</name>
        <dbReference type="ChEBI" id="CHEBI:36655"/>
    </ligand>
</feature>
<feature type="binding site" evidence="1">
    <location>
        <position position="457"/>
    </location>
    <ligand>
        <name>Mg(2+)</name>
        <dbReference type="ChEBI" id="CHEBI:18420"/>
    </ligand>
</feature>
<feature type="binding site" evidence="1">
    <location>
        <position position="538"/>
    </location>
    <ligand>
        <name>acetyl-CoA</name>
        <dbReference type="ChEBI" id="CHEBI:57288"/>
    </ligand>
</feature>
<feature type="modified residue" description="Cysteine sulfenic acid (-SOH)" evidence="1">
    <location>
        <position position="614"/>
    </location>
</feature>
<organism>
    <name type="scientific">Rhodopseudomonas palustris (strain ATCC BAA-98 / CGA009)</name>
    <dbReference type="NCBI Taxonomy" id="258594"/>
    <lineage>
        <taxon>Bacteria</taxon>
        <taxon>Pseudomonadati</taxon>
        <taxon>Pseudomonadota</taxon>
        <taxon>Alphaproteobacteria</taxon>
        <taxon>Hyphomicrobiales</taxon>
        <taxon>Nitrobacteraceae</taxon>
        <taxon>Rhodopseudomonas</taxon>
    </lineage>
</organism>
<keyword id="KW-0963">Cytoplasm</keyword>
<keyword id="KW-0329">Glyoxylate bypass</keyword>
<keyword id="KW-0460">Magnesium</keyword>
<keyword id="KW-0479">Metal-binding</keyword>
<keyword id="KW-0558">Oxidation</keyword>
<keyword id="KW-0808">Transferase</keyword>
<keyword id="KW-0816">Tricarboxylic acid cycle</keyword>
<sequence length="724" mass="78627">MNRIDAHGLKIAPVLFDFIAKEAAPKTGIAPDVFWAGLAAIVRDLAPKTRALLKTRDDLQAKIDAWHLANKGKKQDMAAYTTFLKEIGYLLPEPPTVPVETTNIDEEIGKLCGPQLVVPLSNARYALNAANARWGSLYDAFYGTDAIPQEATQAKGYDKARGDKVIAKAKAFLDQAAPLATGSHSDVTGYSVIAGQLSAKLKSGNATGLKKPAQFAGFRGDAANPSAVLLVNNGLHIEIKIDRANTIGKDDPAGVADLVIESAVSTILDMEDSVAAVDADDKVLIYRNTLGLMDGTLSESFEKGGKTVTRALNGDRTYTAPDGKEISLHGRSLLLMRNVGHHMWTDAVLDSDGQEIPEGFLDAAVSGLIAIHDLKHLGKTRNSRTGSVYIVKPKMHGPDEVALTVELFGRVETMLGLTANTLKVGIMDEERRTTVNLKACIQNASKRIVFINTGFLDRTGDEIHTSMEAGPMIRKNEMKAQPWIKAYEDWNVDTGLVDGLPGHAQIGKGMWAAPDKMADMLAQKIGHPQAGATTAWVPSPTAATLHALHYHQVDVIARQQELAKGGPRAKLEDILTIPVSNSNWAPDDVRQEIDNNCQGILGYVVRWIDQGVGCSKVPDIHDVGLMEDRATLRISSQHLANWLHHGVVTKEQVLDSLKRMAVIVDKQNEGDALYRPMAPDFDGVAFEAACDLIFKGRAQPNGYTEYILHERRREAKAAHLESAR</sequence>
<reference key="1">
    <citation type="journal article" date="2004" name="Nat. Biotechnol.">
        <title>Complete genome sequence of the metabolically versatile photosynthetic bacterium Rhodopseudomonas palustris.</title>
        <authorList>
            <person name="Larimer F.W."/>
            <person name="Chain P."/>
            <person name="Hauser L."/>
            <person name="Lamerdin J.E."/>
            <person name="Malfatti S."/>
            <person name="Do L."/>
            <person name="Land M.L."/>
            <person name="Pelletier D.A."/>
            <person name="Beatty J.T."/>
            <person name="Lang A.S."/>
            <person name="Tabita F.R."/>
            <person name="Gibson J.L."/>
            <person name="Hanson T.E."/>
            <person name="Bobst C."/>
            <person name="Torres y Torres J.L."/>
            <person name="Peres C."/>
            <person name="Harrison F.H."/>
            <person name="Gibson J."/>
            <person name="Harwood C.S."/>
        </authorList>
    </citation>
    <scope>NUCLEOTIDE SEQUENCE [LARGE SCALE GENOMIC DNA]</scope>
    <source>
        <strain>ATCC BAA-98 / CGA009</strain>
    </source>
</reference>